<feature type="chain" id="PRO_0000347015" description="Uncharacterized protein DDB_G0287625">
    <location>
        <begin position="1"/>
        <end position="981"/>
    </location>
</feature>
<feature type="region of interest" description="Disordered" evidence="1">
    <location>
        <begin position="65"/>
        <end position="133"/>
    </location>
</feature>
<feature type="region of interest" description="Disordered" evidence="1">
    <location>
        <begin position="149"/>
        <end position="463"/>
    </location>
</feature>
<feature type="region of interest" description="Disordered" evidence="1">
    <location>
        <begin position="491"/>
        <end position="580"/>
    </location>
</feature>
<feature type="region of interest" description="Disordered" evidence="1">
    <location>
        <begin position="592"/>
        <end position="834"/>
    </location>
</feature>
<feature type="region of interest" description="Disordered" evidence="1">
    <location>
        <begin position="861"/>
        <end position="891"/>
    </location>
</feature>
<feature type="compositionally biased region" description="Acidic residues" evidence="1">
    <location>
        <begin position="75"/>
        <end position="88"/>
    </location>
</feature>
<feature type="compositionally biased region" description="Low complexity" evidence="1">
    <location>
        <begin position="89"/>
        <end position="133"/>
    </location>
</feature>
<feature type="compositionally biased region" description="Low complexity" evidence="1">
    <location>
        <begin position="149"/>
        <end position="158"/>
    </location>
</feature>
<feature type="compositionally biased region" description="Low complexity" evidence="1">
    <location>
        <begin position="170"/>
        <end position="181"/>
    </location>
</feature>
<feature type="compositionally biased region" description="Basic and acidic residues" evidence="1">
    <location>
        <begin position="182"/>
        <end position="195"/>
    </location>
</feature>
<feature type="compositionally biased region" description="Basic residues" evidence="1">
    <location>
        <begin position="196"/>
        <end position="206"/>
    </location>
</feature>
<feature type="compositionally biased region" description="Low complexity" evidence="1">
    <location>
        <begin position="207"/>
        <end position="227"/>
    </location>
</feature>
<feature type="compositionally biased region" description="Basic residues" evidence="1">
    <location>
        <begin position="228"/>
        <end position="269"/>
    </location>
</feature>
<feature type="compositionally biased region" description="Basic and acidic residues" evidence="1">
    <location>
        <begin position="270"/>
        <end position="292"/>
    </location>
</feature>
<feature type="compositionally biased region" description="Basic residues" evidence="1">
    <location>
        <begin position="314"/>
        <end position="358"/>
    </location>
</feature>
<feature type="compositionally biased region" description="Basic and acidic residues" evidence="1">
    <location>
        <begin position="359"/>
        <end position="452"/>
    </location>
</feature>
<feature type="compositionally biased region" description="Low complexity" evidence="1">
    <location>
        <begin position="491"/>
        <end position="553"/>
    </location>
</feature>
<feature type="compositionally biased region" description="Polar residues" evidence="1">
    <location>
        <begin position="554"/>
        <end position="576"/>
    </location>
</feature>
<feature type="compositionally biased region" description="Polar residues" evidence="1">
    <location>
        <begin position="605"/>
        <end position="622"/>
    </location>
</feature>
<feature type="compositionally biased region" description="Basic and acidic residues" evidence="1">
    <location>
        <begin position="623"/>
        <end position="634"/>
    </location>
</feature>
<feature type="compositionally biased region" description="Low complexity" evidence="1">
    <location>
        <begin position="635"/>
        <end position="820"/>
    </location>
</feature>
<feature type="compositionally biased region" description="Low complexity" evidence="1">
    <location>
        <begin position="867"/>
        <end position="891"/>
    </location>
</feature>
<organism>
    <name type="scientific">Dictyostelium discoideum</name>
    <name type="common">Social amoeba</name>
    <dbReference type="NCBI Taxonomy" id="44689"/>
    <lineage>
        <taxon>Eukaryota</taxon>
        <taxon>Amoebozoa</taxon>
        <taxon>Evosea</taxon>
        <taxon>Eumycetozoa</taxon>
        <taxon>Dictyostelia</taxon>
        <taxon>Dictyosteliales</taxon>
        <taxon>Dictyosteliaceae</taxon>
        <taxon>Dictyostelium</taxon>
    </lineage>
</organism>
<name>Y7557_DICDI</name>
<accession>Q54K36</accession>
<evidence type="ECO:0000256" key="1">
    <source>
        <dbReference type="SAM" id="MobiDB-lite"/>
    </source>
</evidence>
<reference key="1">
    <citation type="journal article" date="2005" name="Nature">
        <title>The genome of the social amoeba Dictyostelium discoideum.</title>
        <authorList>
            <person name="Eichinger L."/>
            <person name="Pachebat J.A."/>
            <person name="Gloeckner G."/>
            <person name="Rajandream M.A."/>
            <person name="Sucgang R."/>
            <person name="Berriman M."/>
            <person name="Song J."/>
            <person name="Olsen R."/>
            <person name="Szafranski K."/>
            <person name="Xu Q."/>
            <person name="Tunggal B."/>
            <person name="Kummerfeld S."/>
            <person name="Madera M."/>
            <person name="Konfortov B.A."/>
            <person name="Rivero F."/>
            <person name="Bankier A.T."/>
            <person name="Lehmann R."/>
            <person name="Hamlin N."/>
            <person name="Davies R."/>
            <person name="Gaudet P."/>
            <person name="Fey P."/>
            <person name="Pilcher K."/>
            <person name="Chen G."/>
            <person name="Saunders D."/>
            <person name="Sodergren E.J."/>
            <person name="Davis P."/>
            <person name="Kerhornou A."/>
            <person name="Nie X."/>
            <person name="Hall N."/>
            <person name="Anjard C."/>
            <person name="Hemphill L."/>
            <person name="Bason N."/>
            <person name="Farbrother P."/>
            <person name="Desany B."/>
            <person name="Just E."/>
            <person name="Morio T."/>
            <person name="Rost R."/>
            <person name="Churcher C.M."/>
            <person name="Cooper J."/>
            <person name="Haydock S."/>
            <person name="van Driessche N."/>
            <person name="Cronin A."/>
            <person name="Goodhead I."/>
            <person name="Muzny D.M."/>
            <person name="Mourier T."/>
            <person name="Pain A."/>
            <person name="Lu M."/>
            <person name="Harper D."/>
            <person name="Lindsay R."/>
            <person name="Hauser H."/>
            <person name="James K.D."/>
            <person name="Quiles M."/>
            <person name="Madan Babu M."/>
            <person name="Saito T."/>
            <person name="Buchrieser C."/>
            <person name="Wardroper A."/>
            <person name="Felder M."/>
            <person name="Thangavelu M."/>
            <person name="Johnson D."/>
            <person name="Knights A."/>
            <person name="Loulseged H."/>
            <person name="Mungall K.L."/>
            <person name="Oliver K."/>
            <person name="Price C."/>
            <person name="Quail M.A."/>
            <person name="Urushihara H."/>
            <person name="Hernandez J."/>
            <person name="Rabbinowitsch E."/>
            <person name="Steffen D."/>
            <person name="Sanders M."/>
            <person name="Ma J."/>
            <person name="Kohara Y."/>
            <person name="Sharp S."/>
            <person name="Simmonds M.N."/>
            <person name="Spiegler S."/>
            <person name="Tivey A."/>
            <person name="Sugano S."/>
            <person name="White B."/>
            <person name="Walker D."/>
            <person name="Woodward J.R."/>
            <person name="Winckler T."/>
            <person name="Tanaka Y."/>
            <person name="Shaulsky G."/>
            <person name="Schleicher M."/>
            <person name="Weinstock G.M."/>
            <person name="Rosenthal A."/>
            <person name="Cox E.C."/>
            <person name="Chisholm R.L."/>
            <person name="Gibbs R.A."/>
            <person name="Loomis W.F."/>
            <person name="Platzer M."/>
            <person name="Kay R.R."/>
            <person name="Williams J.G."/>
            <person name="Dear P.H."/>
            <person name="Noegel A.A."/>
            <person name="Barrell B.G."/>
            <person name="Kuspa A."/>
        </authorList>
    </citation>
    <scope>NUCLEOTIDE SEQUENCE [LARGE SCALE GENOMIC DNA]</scope>
    <source>
        <strain>AX4</strain>
    </source>
</reference>
<gene>
    <name type="ORF">DDB_G0287625</name>
</gene>
<protein>
    <recommendedName>
        <fullName>Uncharacterized protein DDB_G0287625</fullName>
    </recommendedName>
</protein>
<proteinExistence type="predicted"/>
<dbReference type="EMBL" id="AAFI02000103">
    <property type="protein sequence ID" value="EAL63621.1"/>
    <property type="molecule type" value="Genomic_DNA"/>
</dbReference>
<dbReference type="RefSeq" id="XP_637128.1">
    <property type="nucleotide sequence ID" value="XM_632036.1"/>
</dbReference>
<dbReference type="STRING" id="44689.Q54K36"/>
<dbReference type="PaxDb" id="44689-DDB0187557"/>
<dbReference type="EnsemblProtists" id="EAL63621">
    <property type="protein sequence ID" value="EAL63621"/>
    <property type="gene ID" value="DDB_G0287625"/>
</dbReference>
<dbReference type="GeneID" id="8626223"/>
<dbReference type="KEGG" id="ddi:DDB_G0287625"/>
<dbReference type="dictyBase" id="DDB_G0287625"/>
<dbReference type="VEuPathDB" id="AmoebaDB:DDB_G0287625"/>
<dbReference type="eggNOG" id="ENOG502RI51">
    <property type="taxonomic scope" value="Eukaryota"/>
</dbReference>
<dbReference type="HOGENOM" id="CLU_303566_0_0_1"/>
<dbReference type="InParanoid" id="Q54K36"/>
<dbReference type="OMA" id="MMESNND"/>
<dbReference type="PRO" id="PR:Q54K36"/>
<dbReference type="Proteomes" id="UP000002195">
    <property type="component" value="Chromosome 5"/>
</dbReference>
<keyword id="KW-1185">Reference proteome</keyword>
<sequence>MEFHLQKKATKTNATTISIEITKPVKNIKLEPGQFIEDIKLIYTHTNTIRKIGTTNYTIVTDNSNIDNFKGIENSSDDDDDDDDDDDYNNNNNNNNNNNNNNNNNNNNNNNNINSNKNINSNNSINNSLSNNSSNINNSSNNISYIGNSSNSINNNDNKLSRSRSRSRGSAKTTSSLTSSKRSLDSRNRNRDRSYTRSRSRSRSRSYSRGFSSLSRSRSRSRSISSRSRSRSRSRRSRSRSSRSRSRSRSKSKSKSRRSRSRSRSRRSRSRSDSRSRSDSRGRSRSRSDSRKNSKRQTKSRSRSESRLPDKNYSSKRHQNSRKRNRSYSRSRTRSWSRSRTRSRSRRRYGGRTFRSPRRSRDDSRDRGRDRERDRDRNRCRDRDRDRERERERRLRDRNRDRERDGYRERDRGRYRERGGERERNRNRDRDRERDRNRDRDRSQSPHNEKNKGFLSSSGNKIETKLKSPISNITKYSDMDIDNNINNIINSNNINNNNIKNSNNINNSNNNNNNNNNNNNNNNNNNNNNNNNNNNNNNNNNNNSHNNTNGNVNGVSKTTSSPASDNSTPENISTDLDSPLLKKNQQLNLIKEQTNKLKTEDSIDESNNNGNDRFKTKCSSTENENKNRENEKNNSENSKNNPNNNNPNNNNNNNNNNNNNNNNNNNNNNNNNNNNNNNNNNNNNNNNNNNNNNNNNNNSNNNNNPNNYNNNNPNNNPNNNNNNNNKNINKNNSNNSNNSNNSSNSRNNSNNSNNNNNNNNLNNNNPNNNNPNNNNPNNNNPNNNNPNNNNNNNNNNNNNNNNNNNNNNNNNKNNNNNNNSFSEEEEEEGSLNQVRNISPKIGKYNEDISFLEKEWNRLGNVQNDTNSSPISQQLSTSSSPFKSTGGSNDGNSSDIIMMESNNDIINDGGKKNRVFKESQVVQRESLDVSKFKKSKAIFFGEGWIYRNHRKEPCVSWRFNNNTPPPDPRLNRDYINLRYVYE</sequence>